<gene>
    <name type="primary">VI</name>
</gene>
<organism>
    <name type="scientific">Xanthomonas phage phiLf</name>
    <name type="common">Bacteriophage phi-Lf</name>
    <dbReference type="NCBI Taxonomy" id="28365"/>
    <lineage>
        <taxon>Viruses</taxon>
        <taxon>Monodnaviria</taxon>
        <taxon>Loebvirae</taxon>
        <taxon>Hofneiviricota</taxon>
        <taxon>Faserviricetes</taxon>
        <taxon>Tubulavirales</taxon>
        <taxon>Inoviridae</taxon>
    </lineage>
</organism>
<feature type="chain" id="PRO_0000378349" description="Head virion protein G6P">
    <location>
        <begin position="1"/>
        <end position="95"/>
    </location>
</feature>
<feature type="transmembrane region" description="Helical" evidence="2">
    <location>
        <begin position="20"/>
        <end position="40"/>
    </location>
</feature>
<feature type="transmembrane region" description="Helical" evidence="2">
    <location>
        <begin position="44"/>
        <end position="64"/>
    </location>
</feature>
<feature type="transmembrane region" description="Helical" evidence="2">
    <location>
        <begin position="66"/>
        <end position="86"/>
    </location>
</feature>
<evidence type="ECO:0000250" key="1"/>
<evidence type="ECO:0000255" key="2"/>
<evidence type="ECO:0000305" key="3"/>
<accession>O55246</accession>
<protein>
    <recommendedName>
        <fullName>Head virion protein G6P</fullName>
    </recommendedName>
    <alternativeName>
        <fullName>Coat protein D</fullName>
    </alternativeName>
    <alternativeName>
        <fullName>G6P</fullName>
    </alternativeName>
</protein>
<name>G6P_BPPHL</name>
<dbReference type="EMBL" id="AF018286">
    <property type="protein sequence ID" value="AAB88260.1"/>
    <property type="molecule type" value="Genomic_DNA"/>
</dbReference>
<dbReference type="PIR" id="JC5767">
    <property type="entry name" value="JC5767"/>
</dbReference>
<dbReference type="Proteomes" id="UP000007611">
    <property type="component" value="Genome"/>
</dbReference>
<dbReference type="GO" id="GO:0033644">
    <property type="term" value="C:host cell membrane"/>
    <property type="evidence" value="ECO:0007669"/>
    <property type="project" value="UniProtKB-SubCell"/>
</dbReference>
<dbReference type="GO" id="GO:0016020">
    <property type="term" value="C:membrane"/>
    <property type="evidence" value="ECO:0007669"/>
    <property type="project" value="UniProtKB-KW"/>
</dbReference>
<dbReference type="GO" id="GO:0044423">
    <property type="term" value="C:virion component"/>
    <property type="evidence" value="ECO:0007669"/>
    <property type="project" value="UniProtKB-KW"/>
</dbReference>
<dbReference type="GO" id="GO:0046718">
    <property type="term" value="P:symbiont entry into host cell"/>
    <property type="evidence" value="ECO:0007669"/>
    <property type="project" value="UniProtKB-KW"/>
</dbReference>
<comment type="function">
    <text>Plays essential roles both in the entry of the viral genome into the bacterial host and in budding process. The formation of the G3P-G6P complex termed adsorption complex is essential for correct termination of filamentous phage assembly.</text>
</comment>
<comment type="subunit">
    <text evidence="1">Interacts with G3P; this interaction is required for proper integration of G3P and G6P into the virion.</text>
</comment>
<comment type="subcellular location">
    <subcellularLocation>
        <location evidence="3">Virion</location>
    </subcellularLocation>
    <subcellularLocation>
        <location evidence="3">Host membrane</location>
        <topology evidence="3">Multi-pass membrane protein</topology>
    </subcellularLocation>
    <text evidence="1">Prior to assembly, G6P is found associated with the bacterial host inner membrane. There are about five copies of G6P in the mature virion. They are located together with G3P at the head side of the filamentous virion (By similarity).</text>
</comment>
<comment type="similarity">
    <text evidence="3">Belongs to the inovirus G6P protein family.</text>
</comment>
<organismHost>
    <name type="scientific">Xanthomonas campestris pv. campestris</name>
    <dbReference type="NCBI Taxonomy" id="340"/>
</organismHost>
<proteinExistence type="inferred from homology"/>
<reference key="1">
    <citation type="journal article" date="1996" name="Gene">
        <title>Nucleotide sequence of the gene presumably encoding the adsorption protein of filamentous phage phi Lf.</title>
        <authorList>
            <person name="Wen F.S."/>
            <person name="Tseng Y.H."/>
        </authorList>
    </citation>
    <scope>NUCLEOTIDE SEQUENCE [GENOMIC DNA]</scope>
</reference>
<reference key="2">
    <citation type="journal article" date="1997" name="Biochem. Biophys. Res. Commun.">
        <title>Identification of gene VI of filamentous phage phi Lf coding for a 10-kDa minor coat protein.</title>
        <authorList>
            <person name="Liu T.J."/>
            <person name="Wen F.S."/>
            <person name="Tseng T.T."/>
            <person name="Yang M.T."/>
            <person name="Lin N.T."/>
            <person name="Tseng Y.H."/>
        </authorList>
    </citation>
    <scope>NUCLEOTIDE SEQUENCE [GENOMIC DNA]</scope>
</reference>
<keyword id="KW-1043">Host membrane</keyword>
<keyword id="KW-0472">Membrane</keyword>
<keyword id="KW-1185">Reference proteome</keyword>
<keyword id="KW-0812">Transmembrane</keyword>
<keyword id="KW-1133">Transmembrane helix</keyword>
<keyword id="KW-1162">Viral penetration into host cytoplasm</keyword>
<keyword id="KW-1241">Viral penetration into host cytoplasm via pilus retraction</keyword>
<keyword id="KW-0946">Virion</keyword>
<keyword id="KW-1160">Virus entry into host cell</keyword>
<sequence length="95" mass="10276">MAVACGQDGVAGDCRFLGDLFVMWLEQSLSAILYVLTLLPMPDFMKGQSIGGMLGNAGSTILWFADVFMIGPALVMIGAAMIFFLLRRVLTLGIW</sequence>